<name>YII6_YEAST</name>
<proteinExistence type="predicted"/>
<accession>P40503</accession>
<accession>A0A1S0T085</accession>
<sequence length="102" mass="11584">MNKIIKESTNFSRYLRTGGVLNSLRTTSKFVYINNNSYLTHGGFDGNVATIFNISEFNYINSSAKGSLLTYKSITFFCPRYFKKRPLGRHAKGKGKSDEKIL</sequence>
<keyword id="KW-1185">Reference proteome</keyword>
<dbReference type="EMBL" id="Z46728">
    <property type="protein sequence ID" value="CAA86708.1"/>
    <property type="molecule type" value="Genomic_DNA"/>
</dbReference>
<dbReference type="EMBL" id="BK006942">
    <property type="protein sequence ID" value="DAA80304.1"/>
    <property type="molecule type" value="Genomic_DNA"/>
</dbReference>
<dbReference type="PIR" id="S49794">
    <property type="entry name" value="S49794"/>
</dbReference>
<dbReference type="RefSeq" id="NP_001335784.1">
    <property type="nucleotide sequence ID" value="NM_001348844.1"/>
</dbReference>
<dbReference type="DIP" id="DIP-4874N"/>
<dbReference type="FunCoup" id="P40503">
    <property type="interactions" value="21"/>
</dbReference>
<dbReference type="IntAct" id="P40503">
    <property type="interactions" value="2"/>
</dbReference>
<dbReference type="iPTMnet" id="P40503"/>
<dbReference type="PaxDb" id="4932-YIL086C"/>
<dbReference type="TopDownProteomics" id="P40503"/>
<dbReference type="EnsemblFungi" id="YIL086C_mRNA">
    <property type="protein sequence ID" value="YIL086C"/>
    <property type="gene ID" value="YIL086C"/>
</dbReference>
<dbReference type="GeneID" id="854723"/>
<dbReference type="AGR" id="SGD:S000001348"/>
<dbReference type="SGD" id="S000001348">
    <property type="gene designation" value="YIL086C"/>
</dbReference>
<dbReference type="HOGENOM" id="CLU_2279652_0_0_1"/>
<dbReference type="InParanoid" id="P40503"/>
<dbReference type="OrthoDB" id="10303685at2759"/>
<dbReference type="PRO" id="PR:P40503"/>
<dbReference type="Proteomes" id="UP000002311">
    <property type="component" value="Chromosome IX"/>
</dbReference>
<dbReference type="RNAct" id="P40503">
    <property type="molecule type" value="protein"/>
</dbReference>
<protein>
    <recommendedName>
        <fullName>Uncharacterized protein YIL086C</fullName>
    </recommendedName>
</protein>
<reference key="1">
    <citation type="journal article" date="1997" name="Nature">
        <title>The nucleotide sequence of Saccharomyces cerevisiae chromosome IX.</title>
        <authorList>
            <person name="Churcher C.M."/>
            <person name="Bowman S."/>
            <person name="Badcock K."/>
            <person name="Bankier A.T."/>
            <person name="Brown D."/>
            <person name="Chillingworth T."/>
            <person name="Connor R."/>
            <person name="Devlin K."/>
            <person name="Gentles S."/>
            <person name="Hamlin N."/>
            <person name="Harris D.E."/>
            <person name="Horsnell T."/>
            <person name="Hunt S."/>
            <person name="Jagels K."/>
            <person name="Jones M."/>
            <person name="Lye G."/>
            <person name="Moule S."/>
            <person name="Odell C."/>
            <person name="Pearson D."/>
            <person name="Rajandream M.A."/>
            <person name="Rice P."/>
            <person name="Rowley N."/>
            <person name="Skelton J."/>
            <person name="Smith V."/>
            <person name="Walsh S.V."/>
            <person name="Whitehead S."/>
            <person name="Barrell B.G."/>
        </authorList>
    </citation>
    <scope>NUCLEOTIDE SEQUENCE [LARGE SCALE GENOMIC DNA]</scope>
    <source>
        <strain>ATCC 204508 / S288c</strain>
    </source>
</reference>
<reference key="2">
    <citation type="journal article" date="2014" name="G3 (Bethesda)">
        <title>The reference genome sequence of Saccharomyces cerevisiae: Then and now.</title>
        <authorList>
            <person name="Engel S.R."/>
            <person name="Dietrich F.S."/>
            <person name="Fisk D.G."/>
            <person name="Binkley G."/>
            <person name="Balakrishnan R."/>
            <person name="Costanzo M.C."/>
            <person name="Dwight S.S."/>
            <person name="Hitz B.C."/>
            <person name="Karra K."/>
            <person name="Nash R.S."/>
            <person name="Weng S."/>
            <person name="Wong E.D."/>
            <person name="Lloyd P."/>
            <person name="Skrzypek M.S."/>
            <person name="Miyasato S.R."/>
            <person name="Simison M."/>
            <person name="Cherry J.M."/>
        </authorList>
    </citation>
    <scope>GENOME REANNOTATION</scope>
    <source>
        <strain>ATCC 204508 / S288c</strain>
    </source>
</reference>
<gene>
    <name type="ordered locus">YIL086C</name>
</gene>
<feature type="chain" id="PRO_0000202978" description="Uncharacterized protein YIL086C">
    <location>
        <begin position="1"/>
        <end position="102"/>
    </location>
</feature>
<organism>
    <name type="scientific">Saccharomyces cerevisiae (strain ATCC 204508 / S288c)</name>
    <name type="common">Baker's yeast</name>
    <dbReference type="NCBI Taxonomy" id="559292"/>
    <lineage>
        <taxon>Eukaryota</taxon>
        <taxon>Fungi</taxon>
        <taxon>Dikarya</taxon>
        <taxon>Ascomycota</taxon>
        <taxon>Saccharomycotina</taxon>
        <taxon>Saccharomycetes</taxon>
        <taxon>Saccharomycetales</taxon>
        <taxon>Saccharomycetaceae</taxon>
        <taxon>Saccharomyces</taxon>
    </lineage>
</organism>